<feature type="chain" id="PRO_0000296088" description="Uncharacterized hydrolase SAV2204">
    <location>
        <begin position="1"/>
        <end position="271"/>
    </location>
</feature>
<accession>Q99S65</accession>
<protein>
    <recommendedName>
        <fullName>Uncharacterized hydrolase SAV2204</fullName>
        <ecNumber>3.-.-.-</ecNumber>
    </recommendedName>
</protein>
<organism>
    <name type="scientific">Staphylococcus aureus (strain Mu50 / ATCC 700699)</name>
    <dbReference type="NCBI Taxonomy" id="158878"/>
    <lineage>
        <taxon>Bacteria</taxon>
        <taxon>Bacillati</taxon>
        <taxon>Bacillota</taxon>
        <taxon>Bacilli</taxon>
        <taxon>Bacillales</taxon>
        <taxon>Staphylococcaceae</taxon>
        <taxon>Staphylococcus</taxon>
    </lineage>
</organism>
<reference key="1">
    <citation type="journal article" date="2001" name="Lancet">
        <title>Whole genome sequencing of meticillin-resistant Staphylococcus aureus.</title>
        <authorList>
            <person name="Kuroda M."/>
            <person name="Ohta T."/>
            <person name="Uchiyama I."/>
            <person name="Baba T."/>
            <person name="Yuzawa H."/>
            <person name="Kobayashi I."/>
            <person name="Cui L."/>
            <person name="Oguchi A."/>
            <person name="Aoki K."/>
            <person name="Nagai Y."/>
            <person name="Lian J.-Q."/>
            <person name="Ito T."/>
            <person name="Kanamori M."/>
            <person name="Matsumaru H."/>
            <person name="Maruyama A."/>
            <person name="Murakami H."/>
            <person name="Hosoyama A."/>
            <person name="Mizutani-Ui Y."/>
            <person name="Takahashi N.K."/>
            <person name="Sawano T."/>
            <person name="Inoue R."/>
            <person name="Kaito C."/>
            <person name="Sekimizu K."/>
            <person name="Hirakawa H."/>
            <person name="Kuhara S."/>
            <person name="Goto S."/>
            <person name="Yabuzaki J."/>
            <person name="Kanehisa M."/>
            <person name="Yamashita A."/>
            <person name="Oshima K."/>
            <person name="Furuya K."/>
            <person name="Yoshino C."/>
            <person name="Shiba T."/>
            <person name="Hattori M."/>
            <person name="Ogasawara N."/>
            <person name="Hayashi H."/>
            <person name="Hiramatsu K."/>
        </authorList>
    </citation>
    <scope>NUCLEOTIDE SEQUENCE [LARGE SCALE GENOMIC DNA]</scope>
    <source>
        <strain>Mu50 / ATCC 700699</strain>
    </source>
</reference>
<sequence>MSKRLLLFDFDETYFKHNTNEEDLSHLREMEKLLEKLTNNNEVITAVLTGSTFQSVMDKMDQVNMTFKPLHIFSDLSSKMFTWNNGEYVESETYKKKVLSEPFLFEDIEDILRHISAQYNVEFIPQRAFEGNETHYNFYFHSTGNHNNDSRILEALVRYANDQNYTARFSRSNPLAGDPENAYDIDFTPSNAGKLYATQFLMKKYNIPVKSILGFGDSGNDEAYLSYLEHAYLMSNSRDEALKQKFRLTKYPYYQGITLHVKEFVEGKYDY</sequence>
<proteinExistence type="inferred from homology"/>
<gene>
    <name type="ordered locus">SAV2204</name>
</gene>
<keyword id="KW-0378">Hydrolase</keyword>
<name>Y2204_STAAM</name>
<dbReference type="EC" id="3.-.-.-"/>
<dbReference type="EMBL" id="BA000017">
    <property type="protein sequence ID" value="BAB58366.1"/>
    <property type="molecule type" value="Genomic_DNA"/>
</dbReference>
<dbReference type="RefSeq" id="WP_000044362.1">
    <property type="nucleotide sequence ID" value="NC_002758.2"/>
</dbReference>
<dbReference type="SMR" id="Q99S65"/>
<dbReference type="DNASU" id="1122229"/>
<dbReference type="KEGG" id="sav:SAV2204"/>
<dbReference type="HOGENOM" id="CLU_084693_0_0_9"/>
<dbReference type="Proteomes" id="UP000002481">
    <property type="component" value="Chromosome"/>
</dbReference>
<dbReference type="GO" id="GO:0005829">
    <property type="term" value="C:cytosol"/>
    <property type="evidence" value="ECO:0007669"/>
    <property type="project" value="TreeGrafter"/>
</dbReference>
<dbReference type="GO" id="GO:0000287">
    <property type="term" value="F:magnesium ion binding"/>
    <property type="evidence" value="ECO:0007669"/>
    <property type="project" value="TreeGrafter"/>
</dbReference>
<dbReference type="GO" id="GO:0016791">
    <property type="term" value="F:phosphatase activity"/>
    <property type="evidence" value="ECO:0007669"/>
    <property type="project" value="TreeGrafter"/>
</dbReference>
<dbReference type="CDD" id="cd02605">
    <property type="entry name" value="HAD_SPP"/>
    <property type="match status" value="1"/>
</dbReference>
<dbReference type="Gene3D" id="3.40.50.1000">
    <property type="entry name" value="HAD superfamily/HAD-like"/>
    <property type="match status" value="1"/>
</dbReference>
<dbReference type="Gene3D" id="3.30.70.1410">
    <property type="entry name" value="yhjk (haloacid dehalogenase-like hydrolase protein) domain"/>
    <property type="match status" value="1"/>
</dbReference>
<dbReference type="InterPro" id="IPR036412">
    <property type="entry name" value="HAD-like_sf"/>
</dbReference>
<dbReference type="InterPro" id="IPR006379">
    <property type="entry name" value="HAD-SF_hydro_IIB"/>
</dbReference>
<dbReference type="InterPro" id="IPR023214">
    <property type="entry name" value="HAD_sf"/>
</dbReference>
<dbReference type="InterPro" id="IPR006380">
    <property type="entry name" value="SPP-like_dom"/>
</dbReference>
<dbReference type="NCBIfam" id="TIGR01484">
    <property type="entry name" value="HAD-SF-IIB"/>
    <property type="match status" value="1"/>
</dbReference>
<dbReference type="PANTHER" id="PTHR10000:SF57">
    <property type="entry name" value="KANOSAMINE-6-PHOSPHATE PHOSPHATASE"/>
    <property type="match status" value="1"/>
</dbReference>
<dbReference type="PANTHER" id="PTHR10000">
    <property type="entry name" value="PHOSPHOSERINE PHOSPHATASE"/>
    <property type="match status" value="1"/>
</dbReference>
<dbReference type="Pfam" id="PF05116">
    <property type="entry name" value="S6PP"/>
    <property type="match status" value="1"/>
</dbReference>
<dbReference type="SFLD" id="SFLDG01141">
    <property type="entry name" value="C2.B.1:_Sucrose_Phosphatase_Li"/>
    <property type="match status" value="1"/>
</dbReference>
<dbReference type="SFLD" id="SFLDG01140">
    <property type="entry name" value="C2.B:_Phosphomannomutase_and_P"/>
    <property type="match status" value="1"/>
</dbReference>
<dbReference type="SUPFAM" id="SSF56784">
    <property type="entry name" value="HAD-like"/>
    <property type="match status" value="1"/>
</dbReference>
<comment type="similarity">
    <text evidence="1">Belongs to the HAD-like hydrolase superfamily.</text>
</comment>
<evidence type="ECO:0000305" key="1"/>